<reference key="1">
    <citation type="submission" date="2006-01" db="EMBL/GenBank/DDBJ databases">
        <title>Complete sequence of Anaeromyxobacter dehalogenans 2CP-C.</title>
        <authorList>
            <person name="Copeland A."/>
            <person name="Lucas S."/>
            <person name="Lapidus A."/>
            <person name="Barry K."/>
            <person name="Detter J.C."/>
            <person name="Glavina T."/>
            <person name="Hammon N."/>
            <person name="Israni S."/>
            <person name="Pitluck S."/>
            <person name="Brettin T."/>
            <person name="Bruce D."/>
            <person name="Han C."/>
            <person name="Tapia R."/>
            <person name="Gilna P."/>
            <person name="Kiss H."/>
            <person name="Schmutz J."/>
            <person name="Larimer F."/>
            <person name="Land M."/>
            <person name="Kyrpides N."/>
            <person name="Anderson I."/>
            <person name="Sanford R.A."/>
            <person name="Ritalahti K.M."/>
            <person name="Thomas H.S."/>
            <person name="Kirby J.R."/>
            <person name="Zhulin I.B."/>
            <person name="Loeffler F.E."/>
            <person name="Richardson P."/>
        </authorList>
    </citation>
    <scope>NUCLEOTIDE SEQUENCE [LARGE SCALE GENOMIC DNA]</scope>
    <source>
        <strain>2CP-C</strain>
    </source>
</reference>
<sequence length="187" mass="20593">MSGGREIALLGGSFNPPHVAHLMAAWWALATQGVSEVWLLPAFRHPFGKELAPFEDRLEMCRLAARALRGVHVCGAEAELAGDPLVGKTARTLEHLAAKHPTYRFALVVGADILAETAKWYRWDRVQELARIIVVGRQGHPPVPGAPDLPAISSTEIRARLARGEDVRGLVPDRVLRYVEAQRLYRG</sequence>
<organism>
    <name type="scientific">Anaeromyxobacter dehalogenans (strain 2CP-C)</name>
    <dbReference type="NCBI Taxonomy" id="290397"/>
    <lineage>
        <taxon>Bacteria</taxon>
        <taxon>Pseudomonadati</taxon>
        <taxon>Myxococcota</taxon>
        <taxon>Myxococcia</taxon>
        <taxon>Myxococcales</taxon>
        <taxon>Cystobacterineae</taxon>
        <taxon>Anaeromyxobacteraceae</taxon>
        <taxon>Anaeromyxobacter</taxon>
    </lineage>
</organism>
<evidence type="ECO:0000255" key="1">
    <source>
        <dbReference type="HAMAP-Rule" id="MF_00244"/>
    </source>
</evidence>
<dbReference type="EC" id="2.7.7.18" evidence="1"/>
<dbReference type="EMBL" id="CP000251">
    <property type="protein sequence ID" value="ABC82179.1"/>
    <property type="molecule type" value="Genomic_DNA"/>
</dbReference>
<dbReference type="RefSeq" id="WP_011421461.1">
    <property type="nucleotide sequence ID" value="NC_007760.1"/>
</dbReference>
<dbReference type="SMR" id="Q2IKJ8"/>
<dbReference type="STRING" id="290397.Adeh_2409"/>
<dbReference type="KEGG" id="ade:Adeh_2409"/>
<dbReference type="eggNOG" id="COG1057">
    <property type="taxonomic scope" value="Bacteria"/>
</dbReference>
<dbReference type="HOGENOM" id="CLU_069765_3_1_7"/>
<dbReference type="OrthoDB" id="5295945at2"/>
<dbReference type="UniPathway" id="UPA00253">
    <property type="reaction ID" value="UER00332"/>
</dbReference>
<dbReference type="Proteomes" id="UP000001935">
    <property type="component" value="Chromosome"/>
</dbReference>
<dbReference type="GO" id="GO:0005524">
    <property type="term" value="F:ATP binding"/>
    <property type="evidence" value="ECO:0007669"/>
    <property type="project" value="UniProtKB-KW"/>
</dbReference>
<dbReference type="GO" id="GO:0004515">
    <property type="term" value="F:nicotinate-nucleotide adenylyltransferase activity"/>
    <property type="evidence" value="ECO:0007669"/>
    <property type="project" value="UniProtKB-UniRule"/>
</dbReference>
<dbReference type="GO" id="GO:0009435">
    <property type="term" value="P:NAD biosynthetic process"/>
    <property type="evidence" value="ECO:0007669"/>
    <property type="project" value="UniProtKB-UniRule"/>
</dbReference>
<dbReference type="CDD" id="cd02165">
    <property type="entry name" value="NMNAT"/>
    <property type="match status" value="1"/>
</dbReference>
<dbReference type="Gene3D" id="3.40.50.620">
    <property type="entry name" value="HUPs"/>
    <property type="match status" value="1"/>
</dbReference>
<dbReference type="HAMAP" id="MF_00244">
    <property type="entry name" value="NaMN_adenylyltr"/>
    <property type="match status" value="1"/>
</dbReference>
<dbReference type="InterPro" id="IPR004821">
    <property type="entry name" value="Cyt_trans-like"/>
</dbReference>
<dbReference type="InterPro" id="IPR005248">
    <property type="entry name" value="NadD/NMNAT"/>
</dbReference>
<dbReference type="InterPro" id="IPR014729">
    <property type="entry name" value="Rossmann-like_a/b/a_fold"/>
</dbReference>
<dbReference type="NCBIfam" id="TIGR00482">
    <property type="entry name" value="nicotinate (nicotinamide) nucleotide adenylyltransferase"/>
    <property type="match status" value="1"/>
</dbReference>
<dbReference type="PANTHER" id="PTHR39321">
    <property type="entry name" value="NICOTINATE-NUCLEOTIDE ADENYLYLTRANSFERASE-RELATED"/>
    <property type="match status" value="1"/>
</dbReference>
<dbReference type="PANTHER" id="PTHR39321:SF3">
    <property type="entry name" value="PHOSPHOPANTETHEINE ADENYLYLTRANSFERASE"/>
    <property type="match status" value="1"/>
</dbReference>
<dbReference type="Pfam" id="PF01467">
    <property type="entry name" value="CTP_transf_like"/>
    <property type="match status" value="1"/>
</dbReference>
<dbReference type="SUPFAM" id="SSF52374">
    <property type="entry name" value="Nucleotidylyl transferase"/>
    <property type="match status" value="1"/>
</dbReference>
<name>NADD_ANADE</name>
<gene>
    <name evidence="1" type="primary">nadD</name>
    <name type="ordered locus">Adeh_2409</name>
</gene>
<proteinExistence type="inferred from homology"/>
<protein>
    <recommendedName>
        <fullName evidence="1">Probable nicotinate-nucleotide adenylyltransferase</fullName>
        <ecNumber evidence="1">2.7.7.18</ecNumber>
    </recommendedName>
    <alternativeName>
        <fullName evidence="1">Deamido-NAD(+) diphosphorylase</fullName>
    </alternativeName>
    <alternativeName>
        <fullName evidence="1">Deamido-NAD(+) pyrophosphorylase</fullName>
    </alternativeName>
    <alternativeName>
        <fullName evidence="1">Nicotinate mononucleotide adenylyltransferase</fullName>
        <shortName evidence="1">NaMN adenylyltransferase</shortName>
    </alternativeName>
</protein>
<feature type="chain" id="PRO_1000044683" description="Probable nicotinate-nucleotide adenylyltransferase">
    <location>
        <begin position="1"/>
        <end position="187"/>
    </location>
</feature>
<comment type="function">
    <text evidence="1">Catalyzes the reversible adenylation of nicotinate mononucleotide (NaMN) to nicotinic acid adenine dinucleotide (NaAD).</text>
</comment>
<comment type="catalytic activity">
    <reaction evidence="1">
        <text>nicotinate beta-D-ribonucleotide + ATP + H(+) = deamido-NAD(+) + diphosphate</text>
        <dbReference type="Rhea" id="RHEA:22860"/>
        <dbReference type="ChEBI" id="CHEBI:15378"/>
        <dbReference type="ChEBI" id="CHEBI:30616"/>
        <dbReference type="ChEBI" id="CHEBI:33019"/>
        <dbReference type="ChEBI" id="CHEBI:57502"/>
        <dbReference type="ChEBI" id="CHEBI:58437"/>
        <dbReference type="EC" id="2.7.7.18"/>
    </reaction>
</comment>
<comment type="pathway">
    <text evidence="1">Cofactor biosynthesis; NAD(+) biosynthesis; deamido-NAD(+) from nicotinate D-ribonucleotide: step 1/1.</text>
</comment>
<comment type="similarity">
    <text evidence="1">Belongs to the NadD family.</text>
</comment>
<keyword id="KW-0067">ATP-binding</keyword>
<keyword id="KW-0520">NAD</keyword>
<keyword id="KW-0547">Nucleotide-binding</keyword>
<keyword id="KW-0548">Nucleotidyltransferase</keyword>
<keyword id="KW-0662">Pyridine nucleotide biosynthesis</keyword>
<keyword id="KW-1185">Reference proteome</keyword>
<keyword id="KW-0808">Transferase</keyword>
<accession>Q2IKJ8</accession>